<keyword id="KW-0027">Amidation</keyword>
<keyword id="KW-0903">Direct protein sequencing</keyword>
<keyword id="KW-1015">Disulfide bond</keyword>
<keyword id="KW-0872">Ion channel impairing toxin</keyword>
<keyword id="KW-0964">Secreted</keyword>
<keyword id="KW-0800">Toxin</keyword>
<evidence type="ECO:0000250" key="1">
    <source>
        <dbReference type="UniProtKB" id="P0C248"/>
    </source>
</evidence>
<evidence type="ECO:0000250" key="2">
    <source>
        <dbReference type="UniProtKB" id="P0C250"/>
    </source>
</evidence>
<evidence type="ECO:0000250" key="3">
    <source>
        <dbReference type="UniProtKB" id="P62903"/>
    </source>
</evidence>
<evidence type="ECO:0000250" key="4">
    <source>
        <dbReference type="UniProtKB" id="P83047"/>
    </source>
</evidence>
<evidence type="ECO:0000269" key="5">
    <source>
    </source>
</evidence>
<evidence type="ECO:0000303" key="6">
    <source>
    </source>
</evidence>
<evidence type="ECO:0000305" key="7"/>
<evidence type="ECO:0000305" key="8">
    <source>
    </source>
</evidence>
<name>COW81_CONLI</name>
<organism>
    <name type="scientific">Conus lividus</name>
    <name type="common">Livid cone</name>
    <dbReference type="NCBI Taxonomy" id="89426"/>
    <lineage>
        <taxon>Eukaryota</taxon>
        <taxon>Metazoa</taxon>
        <taxon>Spiralia</taxon>
        <taxon>Lophotrochozoa</taxon>
        <taxon>Mollusca</taxon>
        <taxon>Gastropoda</taxon>
        <taxon>Caenogastropoda</taxon>
        <taxon>Neogastropoda</taxon>
        <taxon>Conoidea</taxon>
        <taxon>Conidae</taxon>
        <taxon>Conus</taxon>
        <taxon>Lividoconus</taxon>
    </lineage>
</organism>
<reference key="1">
    <citation type="journal article" date="2017" name="Toxicon">
        <title>Identification of short single disulfide-containing contryphans from the venom of cone snails using de novo mass spectrometry-based sequencing methods.</title>
        <authorList>
            <person name="Franklin J.B."/>
            <person name="Rajesh R.P."/>
            <person name="Vinithkumar N.V."/>
            <person name="Kirubagaran R."/>
        </authorList>
    </citation>
    <scope>PROTEIN SEQUENCE</scope>
    <scope>SUBCELLULAR LOCATION</scope>
    <scope>MASS SPECTROMETRY</scope>
    <scope>AMIDATION AT CYS-8</scope>
    <scope>DISULFIDE BOND</scope>
    <source>
        <tissue>Venom</tissue>
    </source>
</reference>
<feature type="peptide" id="PRO_0000451481" description="Contryphan Li981" evidence="5">
    <location>
        <begin position="1"/>
        <end position="8"/>
    </location>
</feature>
<feature type="modified residue" description="Cysteine amide" evidence="5">
    <location>
        <position position="8"/>
    </location>
</feature>
<feature type="disulfide bond" evidence="5">
    <location>
        <begin position="2"/>
        <end position="8"/>
    </location>
</feature>
<protein>
    <recommendedName>
        <fullName evidence="6">Contryphan Li981</fullName>
    </recommendedName>
</protein>
<dbReference type="GO" id="GO:0005576">
    <property type="term" value="C:extracellular region"/>
    <property type="evidence" value="ECO:0007669"/>
    <property type="project" value="UniProtKB-SubCell"/>
</dbReference>
<dbReference type="GO" id="GO:0099106">
    <property type="term" value="F:ion channel regulator activity"/>
    <property type="evidence" value="ECO:0007669"/>
    <property type="project" value="UniProtKB-KW"/>
</dbReference>
<dbReference type="GO" id="GO:0090729">
    <property type="term" value="F:toxin activity"/>
    <property type="evidence" value="ECO:0007669"/>
    <property type="project" value="UniProtKB-KW"/>
</dbReference>
<comment type="function">
    <text evidence="1 2 3 4">Its target is unknown, but this toxin may modulate voltage-activated calcium channels (Cav) or calcium-dependent potassium channels (KCa).</text>
</comment>
<comment type="subcellular location">
    <subcellularLocation>
        <location evidence="5">Secreted</location>
    </subcellularLocation>
</comment>
<comment type="tissue specificity">
    <text evidence="8">Expressed by the venom duct.</text>
</comment>
<comment type="domain">
    <text evidence="7">The cysteine framework is C-C.</text>
</comment>
<comment type="mass spectrometry" mass="982.0" method="Electrospray" evidence="5">
    <text>Average mass.</text>
</comment>
<comment type="similarity">
    <text evidence="7">Belongs to the O2 superfamily. Contryphan family.</text>
</comment>
<proteinExistence type="evidence at protein level"/>
<accession>P0DUC7</accession>
<sequence length="8" mass="985">GCEWDSWC</sequence>